<reference key="1">
    <citation type="journal article" date="2007" name="Genome Biol.">
        <title>Characterization and modeling of the Haemophilus influenzae core and supragenomes based on the complete genomic sequences of Rd and 12 clinical nontypeable strains.</title>
        <authorList>
            <person name="Hogg J.S."/>
            <person name="Hu F.Z."/>
            <person name="Janto B."/>
            <person name="Boissy R."/>
            <person name="Hayes J."/>
            <person name="Keefe R."/>
            <person name="Post J.C."/>
            <person name="Ehrlich G.D."/>
        </authorList>
    </citation>
    <scope>NUCLEOTIDE SEQUENCE [LARGE SCALE GENOMIC DNA]</scope>
    <source>
        <strain>PittGG</strain>
    </source>
</reference>
<protein>
    <recommendedName>
        <fullName evidence="1">Thymidylate kinase</fullName>
        <ecNumber evidence="1">2.7.4.9</ecNumber>
    </recommendedName>
    <alternativeName>
        <fullName evidence="1">dTMP kinase</fullName>
    </alternativeName>
</protein>
<sequence>MKGKFIVIEGLEGAGKSSAHQSVVRVLHELGIKDVVFTREPGGTPLAEKLRHLIKHETEEPVTDKAELLMLYAARIQLVENVIKPALMQGKWVVGDRHDMSSQAYQGGGRQLDPHFMLTLKETVLGDFEPDLTIYLDIDPIVGLARARGRGELDRIEQMDLDFFRRTRARYLALVKDNPKAVMINAEQSIELVQADIERAVKNWWKSNEK</sequence>
<name>KTHY_HAEIG</name>
<accession>A5UGW7</accession>
<comment type="function">
    <text evidence="1">Phosphorylation of dTMP to form dTDP in both de novo and salvage pathways of dTTP synthesis.</text>
</comment>
<comment type="catalytic activity">
    <reaction evidence="1">
        <text>dTMP + ATP = dTDP + ADP</text>
        <dbReference type="Rhea" id="RHEA:13517"/>
        <dbReference type="ChEBI" id="CHEBI:30616"/>
        <dbReference type="ChEBI" id="CHEBI:58369"/>
        <dbReference type="ChEBI" id="CHEBI:63528"/>
        <dbReference type="ChEBI" id="CHEBI:456216"/>
        <dbReference type="EC" id="2.7.4.9"/>
    </reaction>
</comment>
<comment type="similarity">
    <text evidence="1">Belongs to the thymidylate kinase family.</text>
</comment>
<organism>
    <name type="scientific">Haemophilus influenzae (strain PittGG)</name>
    <dbReference type="NCBI Taxonomy" id="374931"/>
    <lineage>
        <taxon>Bacteria</taxon>
        <taxon>Pseudomonadati</taxon>
        <taxon>Pseudomonadota</taxon>
        <taxon>Gammaproteobacteria</taxon>
        <taxon>Pasteurellales</taxon>
        <taxon>Pasteurellaceae</taxon>
        <taxon>Haemophilus</taxon>
    </lineage>
</organism>
<evidence type="ECO:0000255" key="1">
    <source>
        <dbReference type="HAMAP-Rule" id="MF_00165"/>
    </source>
</evidence>
<dbReference type="EC" id="2.7.4.9" evidence="1"/>
<dbReference type="EMBL" id="CP000672">
    <property type="protein sequence ID" value="ABR00023.1"/>
    <property type="molecule type" value="Genomic_DNA"/>
</dbReference>
<dbReference type="SMR" id="A5UGW7"/>
<dbReference type="KEGG" id="hiq:CGSHiGG_05520"/>
<dbReference type="HOGENOM" id="CLU_049131_0_1_6"/>
<dbReference type="Proteomes" id="UP000001990">
    <property type="component" value="Chromosome"/>
</dbReference>
<dbReference type="GO" id="GO:0005829">
    <property type="term" value="C:cytosol"/>
    <property type="evidence" value="ECO:0007669"/>
    <property type="project" value="TreeGrafter"/>
</dbReference>
<dbReference type="GO" id="GO:0005524">
    <property type="term" value="F:ATP binding"/>
    <property type="evidence" value="ECO:0007669"/>
    <property type="project" value="UniProtKB-UniRule"/>
</dbReference>
<dbReference type="GO" id="GO:0004798">
    <property type="term" value="F:dTMP kinase activity"/>
    <property type="evidence" value="ECO:0007669"/>
    <property type="project" value="UniProtKB-UniRule"/>
</dbReference>
<dbReference type="GO" id="GO:0006233">
    <property type="term" value="P:dTDP biosynthetic process"/>
    <property type="evidence" value="ECO:0007669"/>
    <property type="project" value="InterPro"/>
</dbReference>
<dbReference type="GO" id="GO:0006235">
    <property type="term" value="P:dTTP biosynthetic process"/>
    <property type="evidence" value="ECO:0007669"/>
    <property type="project" value="UniProtKB-UniRule"/>
</dbReference>
<dbReference type="GO" id="GO:0006227">
    <property type="term" value="P:dUDP biosynthetic process"/>
    <property type="evidence" value="ECO:0007669"/>
    <property type="project" value="TreeGrafter"/>
</dbReference>
<dbReference type="CDD" id="cd01672">
    <property type="entry name" value="TMPK"/>
    <property type="match status" value="1"/>
</dbReference>
<dbReference type="FunFam" id="3.40.50.300:FF:000321">
    <property type="entry name" value="Thymidylate kinase"/>
    <property type="match status" value="1"/>
</dbReference>
<dbReference type="Gene3D" id="3.40.50.300">
    <property type="entry name" value="P-loop containing nucleotide triphosphate hydrolases"/>
    <property type="match status" value="1"/>
</dbReference>
<dbReference type="HAMAP" id="MF_00165">
    <property type="entry name" value="Thymidylate_kinase"/>
    <property type="match status" value="1"/>
</dbReference>
<dbReference type="InterPro" id="IPR027417">
    <property type="entry name" value="P-loop_NTPase"/>
</dbReference>
<dbReference type="InterPro" id="IPR039430">
    <property type="entry name" value="Thymidylate_kin-like_dom"/>
</dbReference>
<dbReference type="InterPro" id="IPR018095">
    <property type="entry name" value="Thymidylate_kin_CS"/>
</dbReference>
<dbReference type="InterPro" id="IPR018094">
    <property type="entry name" value="Thymidylate_kinase"/>
</dbReference>
<dbReference type="NCBIfam" id="TIGR00041">
    <property type="entry name" value="DTMP_kinase"/>
    <property type="match status" value="1"/>
</dbReference>
<dbReference type="PANTHER" id="PTHR10344">
    <property type="entry name" value="THYMIDYLATE KINASE"/>
    <property type="match status" value="1"/>
</dbReference>
<dbReference type="PANTHER" id="PTHR10344:SF4">
    <property type="entry name" value="UMP-CMP KINASE 2, MITOCHONDRIAL"/>
    <property type="match status" value="1"/>
</dbReference>
<dbReference type="Pfam" id="PF02223">
    <property type="entry name" value="Thymidylate_kin"/>
    <property type="match status" value="1"/>
</dbReference>
<dbReference type="SUPFAM" id="SSF52540">
    <property type="entry name" value="P-loop containing nucleoside triphosphate hydrolases"/>
    <property type="match status" value="1"/>
</dbReference>
<dbReference type="PROSITE" id="PS01331">
    <property type="entry name" value="THYMIDYLATE_KINASE"/>
    <property type="match status" value="1"/>
</dbReference>
<feature type="chain" id="PRO_1000123577" description="Thymidylate kinase">
    <location>
        <begin position="1"/>
        <end position="210"/>
    </location>
</feature>
<feature type="binding site" evidence="1">
    <location>
        <begin position="10"/>
        <end position="17"/>
    </location>
    <ligand>
        <name>ATP</name>
        <dbReference type="ChEBI" id="CHEBI:30616"/>
    </ligand>
</feature>
<proteinExistence type="inferred from homology"/>
<gene>
    <name evidence="1" type="primary">tmk</name>
    <name type="ordered locus">CGSHiGG_05520</name>
</gene>
<keyword id="KW-0067">ATP-binding</keyword>
<keyword id="KW-0418">Kinase</keyword>
<keyword id="KW-0545">Nucleotide biosynthesis</keyword>
<keyword id="KW-0547">Nucleotide-binding</keyword>
<keyword id="KW-0808">Transferase</keyword>